<proteinExistence type="inferred from homology"/>
<dbReference type="EMBL" id="HE600958">
    <property type="protein sequence ID" value="CAP31213.2"/>
    <property type="status" value="ALT_SEQ"/>
    <property type="molecule type" value="Genomic_DNA"/>
</dbReference>
<dbReference type="SMR" id="A8XEZ1"/>
<dbReference type="FunCoup" id="A8XEZ1">
    <property type="interactions" value="1867"/>
</dbReference>
<dbReference type="STRING" id="6238.A8XEZ1"/>
<dbReference type="EnsemblMetazoa" id="CBG12216.1">
    <property type="protein sequence ID" value="CBG12216.1"/>
    <property type="gene ID" value="WBGene00033199"/>
</dbReference>
<dbReference type="WormBase" id="CBG12216">
    <property type="protein sequence ID" value="CBP37981"/>
    <property type="gene ID" value="WBGene00033199"/>
    <property type="gene designation" value="Cbr-ced-12"/>
</dbReference>
<dbReference type="eggNOG" id="KOG2999">
    <property type="taxonomic scope" value="Eukaryota"/>
</dbReference>
<dbReference type="HOGENOM" id="CLU_339579_0_0_1"/>
<dbReference type="InParanoid" id="A8XEZ1"/>
<dbReference type="Proteomes" id="UP000008549">
    <property type="component" value="Unassembled WGS sequence"/>
</dbReference>
<dbReference type="GO" id="GO:0005737">
    <property type="term" value="C:cytoplasm"/>
    <property type="evidence" value="ECO:0000250"/>
    <property type="project" value="UniProtKB"/>
</dbReference>
<dbReference type="GO" id="GO:0005886">
    <property type="term" value="C:plasma membrane"/>
    <property type="evidence" value="ECO:0000318"/>
    <property type="project" value="GO_Central"/>
</dbReference>
<dbReference type="GO" id="GO:0019899">
    <property type="term" value="F:enzyme binding"/>
    <property type="evidence" value="ECO:0000250"/>
    <property type="project" value="UniProtKB"/>
</dbReference>
<dbReference type="GO" id="GO:0070064">
    <property type="term" value="F:proline-rich region binding"/>
    <property type="evidence" value="ECO:0000250"/>
    <property type="project" value="UniProtKB"/>
</dbReference>
<dbReference type="GO" id="GO:0044877">
    <property type="term" value="F:protein-containing complex binding"/>
    <property type="evidence" value="ECO:0000250"/>
    <property type="project" value="UniProtKB"/>
</dbReference>
<dbReference type="GO" id="GO:0017124">
    <property type="term" value="F:SH3 domain binding"/>
    <property type="evidence" value="ECO:0007669"/>
    <property type="project" value="UniProtKB-KW"/>
</dbReference>
<dbReference type="GO" id="GO:0030036">
    <property type="term" value="P:actin cytoskeleton organization"/>
    <property type="evidence" value="ECO:0000250"/>
    <property type="project" value="UniProtKB"/>
</dbReference>
<dbReference type="GO" id="GO:0007015">
    <property type="term" value="P:actin filament organization"/>
    <property type="evidence" value="ECO:0000318"/>
    <property type="project" value="GO_Central"/>
</dbReference>
<dbReference type="GO" id="GO:0006915">
    <property type="term" value="P:apoptotic process"/>
    <property type="evidence" value="ECO:0007669"/>
    <property type="project" value="UniProtKB-KW"/>
</dbReference>
<dbReference type="GO" id="GO:0016477">
    <property type="term" value="P:cell migration"/>
    <property type="evidence" value="ECO:0000250"/>
    <property type="project" value="UniProtKB"/>
</dbReference>
<dbReference type="GO" id="GO:0048870">
    <property type="term" value="P:cell motility"/>
    <property type="evidence" value="ECO:0000318"/>
    <property type="project" value="GO_Central"/>
</dbReference>
<dbReference type="GO" id="GO:0060097">
    <property type="term" value="P:cytoskeletal rearrangement involved in phagocytosis, engulfment"/>
    <property type="evidence" value="ECO:0000250"/>
    <property type="project" value="UniProtKB"/>
</dbReference>
<dbReference type="GO" id="GO:0043652">
    <property type="term" value="P:engulfment of apoptotic cell"/>
    <property type="evidence" value="ECO:0000250"/>
    <property type="project" value="UniProtKB"/>
</dbReference>
<dbReference type="GO" id="GO:0035262">
    <property type="term" value="P:gonad morphogenesis"/>
    <property type="evidence" value="ECO:0000250"/>
    <property type="project" value="UniProtKB"/>
</dbReference>
<dbReference type="GO" id="GO:0006911">
    <property type="term" value="P:phagocytosis, engulfment"/>
    <property type="evidence" value="ECO:0000250"/>
    <property type="project" value="UniProtKB"/>
</dbReference>
<dbReference type="FunFam" id="1.25.10.10:FF:001432">
    <property type="entry name" value="Cell death abnormality protein 12"/>
    <property type="match status" value="1"/>
</dbReference>
<dbReference type="Gene3D" id="6.10.10.90">
    <property type="match status" value="1"/>
</dbReference>
<dbReference type="Gene3D" id="1.25.10.10">
    <property type="entry name" value="Leucine-rich Repeat Variant"/>
    <property type="match status" value="1"/>
</dbReference>
<dbReference type="InterPro" id="IPR011989">
    <property type="entry name" value="ARM-like"/>
</dbReference>
<dbReference type="InterPro" id="IPR016024">
    <property type="entry name" value="ARM-type_fold"/>
</dbReference>
<dbReference type="InterPro" id="IPR024574">
    <property type="entry name" value="ELMO_ARM"/>
</dbReference>
<dbReference type="InterPro" id="IPR006816">
    <property type="entry name" value="ELMO_dom"/>
</dbReference>
<dbReference type="InterPro" id="IPR050868">
    <property type="entry name" value="ELMO_domain-containing"/>
</dbReference>
<dbReference type="InterPro" id="IPR001849">
    <property type="entry name" value="PH_domain"/>
</dbReference>
<dbReference type="PANTHER" id="PTHR12771:SF56">
    <property type="entry name" value="CED-12"/>
    <property type="match status" value="1"/>
</dbReference>
<dbReference type="PANTHER" id="PTHR12771">
    <property type="entry name" value="ENGULFMENT AND CELL MOTILITY"/>
    <property type="match status" value="1"/>
</dbReference>
<dbReference type="Pfam" id="PF11841">
    <property type="entry name" value="ELMO_ARM"/>
    <property type="match status" value="1"/>
</dbReference>
<dbReference type="Pfam" id="PF16457">
    <property type="entry name" value="PH_12"/>
    <property type="match status" value="1"/>
</dbReference>
<dbReference type="SUPFAM" id="SSF48371">
    <property type="entry name" value="ARM repeat"/>
    <property type="match status" value="1"/>
</dbReference>
<dbReference type="PROSITE" id="PS51335">
    <property type="entry name" value="ELMO"/>
    <property type="match status" value="1"/>
</dbReference>
<protein>
    <recommendedName>
        <fullName evidence="2">Cell death abnormality protein 12</fullName>
    </recommendedName>
</protein>
<keyword id="KW-0053">Apoptosis</keyword>
<keyword id="KW-0963">Cytoplasm</keyword>
<keyword id="KW-0581">Phagocytosis</keyword>
<keyword id="KW-1185">Reference proteome</keyword>
<keyword id="KW-0729">SH3-binding</keyword>
<comment type="function">
    <text evidence="1">Involved in apoptosis and necrosis. Required for the cell corpse engulfment process. Has roles in the formation of actin halos and distal tip cell migration. Plays no role in amphid axon outgrowth (By similarity).</text>
</comment>
<comment type="subunit">
    <text evidence="1">Interacts with psr-1. Forms a ternary complex with ced-2 and ced-5 (By similarity).</text>
</comment>
<comment type="subcellular location">
    <subcellularLocation>
        <location evidence="1">Cytoplasm</location>
    </subcellularLocation>
    <text evidence="1">Punctate localization.</text>
</comment>
<comment type="sequence caution" evidence="5">
    <conflict type="erroneous gene model prediction">
        <sequence resource="EMBL-CDS" id="CAP31213"/>
    </conflict>
</comment>
<comment type="sequence caution" evidence="5">
    <conflict type="erroneous initiation">
        <sequence resource="EMBL-CDS" id="CAP31213"/>
    </conflict>
    <text>Extended N-terminus.</text>
</comment>
<organism>
    <name type="scientific">Caenorhabditis briggsae</name>
    <dbReference type="NCBI Taxonomy" id="6238"/>
    <lineage>
        <taxon>Eukaryota</taxon>
        <taxon>Metazoa</taxon>
        <taxon>Ecdysozoa</taxon>
        <taxon>Nematoda</taxon>
        <taxon>Chromadorea</taxon>
        <taxon>Rhabditida</taxon>
        <taxon>Rhabditina</taxon>
        <taxon>Rhabditomorpha</taxon>
        <taxon>Rhabditoidea</taxon>
        <taxon>Rhabditidae</taxon>
        <taxon>Peloderinae</taxon>
        <taxon>Caenorhabditis</taxon>
    </lineage>
</organism>
<gene>
    <name evidence="6" type="primary">ced-12</name>
    <name evidence="6" type="ORF">CBG12216</name>
</gene>
<accession>A8XEZ1</accession>
<sequence length="740" mass="83972">MPSTSLPYTQMAFHMPLKELQPVDTSLPEHIIKGAVVIDKELTTWNRRAVIPSTALHTVFITINRLEQKQADVVKMAAREMNLPEDNTYGLMADAPKRFITNENIDQLGSGFILTLCASPDNYVKRITEILEDGKNIAQMENAVKTLDEFSLDPALIEAFYRCSSLELLFDLVRDDRVSMSYTLLSTCLRALSSILELAVGDVTWKSVPRDVVVSIAALVTGKAKREEVNTLLAALAMIEQLVIGDDTTRDWVLEEVPIETLIRHVEKSDERIALAALSLMNSMIRHCSDKDKRLELIESLEVVPFRNAVHSSLLRDGSARDPKALEQLVEVQRSLISAYDTSPASDSEIQKVLDIDSANENSEEDVEIWRTKLAEHRCGRLATVAMVLFGEKSPQDLRMLISENTMRIEGGKWQLIPMWMRCCDITAELFGLLPGRDELDRLISIIFSTDSPFPAVFSCIVHLFHRTWREMQAKGGEMDKVASFVLEQLRHVLKRKEIHDVEEMSADLETFSYKAMQEVRREEQLEKENDQLHSEAVISLKAKLRPKIEELVRINHLNYLKKGDVFRKPMKSKSLAKAAYWFWKLDASEKMLTITACDGERFVDDGHRDDIRQVWLKDVADVTNNDEIDRKASSSRFASSPSTNMLRGVRVQLKPTNDLKEGEVLMALTPDETQAGIWQESLAYLVGNTEMRSKTNAIVERMLKMELRVRLLNVKLADPENEPDVPPIPDDLISFISSF</sequence>
<name>CED12_CAEBR</name>
<reference key="1">
    <citation type="journal article" date="2003" name="PLoS Biol.">
        <title>The genome sequence of Caenorhabditis briggsae: a platform for comparative genomics.</title>
        <authorList>
            <person name="Stein L.D."/>
            <person name="Bao Z."/>
            <person name="Blasiar D."/>
            <person name="Blumenthal T."/>
            <person name="Brent M.R."/>
            <person name="Chen N."/>
            <person name="Chinwalla A."/>
            <person name="Clarke L."/>
            <person name="Clee C."/>
            <person name="Coghlan A."/>
            <person name="Coulson A."/>
            <person name="D'Eustachio P."/>
            <person name="Fitch D.H.A."/>
            <person name="Fulton L.A."/>
            <person name="Fulton R.E."/>
            <person name="Griffiths-Jones S."/>
            <person name="Harris T.W."/>
            <person name="Hillier L.W."/>
            <person name="Kamath R."/>
            <person name="Kuwabara P.E."/>
            <person name="Mardis E.R."/>
            <person name="Marra M.A."/>
            <person name="Miner T.L."/>
            <person name="Minx P."/>
            <person name="Mullikin J.C."/>
            <person name="Plumb R.W."/>
            <person name="Rogers J."/>
            <person name="Schein J.E."/>
            <person name="Sohrmann M."/>
            <person name="Spieth J."/>
            <person name="Stajich J.E."/>
            <person name="Wei C."/>
            <person name="Willey D."/>
            <person name="Wilson R.K."/>
            <person name="Durbin R.M."/>
            <person name="Waterston R.H."/>
        </authorList>
    </citation>
    <scope>NUCLEOTIDE SEQUENCE [LARGE SCALE GENOMIC DNA]</scope>
    <source>
        <strain>AF16</strain>
    </source>
</reference>
<evidence type="ECO:0000250" key="1"/>
<evidence type="ECO:0000250" key="2">
    <source>
        <dbReference type="UniProtKB" id="Q8STE5"/>
    </source>
</evidence>
<evidence type="ECO:0000255" key="3"/>
<evidence type="ECO:0000255" key="4">
    <source>
        <dbReference type="PROSITE-ProRule" id="PRU00664"/>
    </source>
</evidence>
<evidence type="ECO:0000305" key="5"/>
<evidence type="ECO:0000312" key="6">
    <source>
        <dbReference type="WormBase" id="CBG12216"/>
    </source>
</evidence>
<feature type="chain" id="PRO_0000379435" description="Cell death abnormality protein 12">
    <location>
        <begin position="1"/>
        <end position="740"/>
    </location>
</feature>
<feature type="domain" description="ELMO" evidence="4">
    <location>
        <begin position="348"/>
        <end position="494"/>
    </location>
</feature>
<feature type="region of interest" description="Required for punctate localization, cell corpse engulfment and distal cell tip migration" evidence="1">
    <location>
        <begin position="555"/>
        <end position="690"/>
    </location>
</feature>
<feature type="short sequence motif" description="SH3-binding" evidence="3">
    <location>
        <begin position="724"/>
        <end position="727"/>
    </location>
</feature>